<comment type="function">
    <text evidence="1 2">Transcriptional regulator (By similarity). Binds to the right arm of the replication origin oriC of the chromosome. Rob binding may influence the formation of the nucleoprotein structure, required for oriC function in the initiation of replication (By similarity).</text>
</comment>
<evidence type="ECO:0000250" key="1">
    <source>
        <dbReference type="UniProtKB" id="P0ACI0"/>
    </source>
</evidence>
<evidence type="ECO:0000250" key="2">
    <source>
        <dbReference type="UniProtKB" id="Q8ZJU7"/>
    </source>
</evidence>
<evidence type="ECO:0000255" key="3">
    <source>
        <dbReference type="PROSITE-ProRule" id="PRU00593"/>
    </source>
</evidence>
<gene>
    <name type="primary">rob</name>
    <name type="ordered locus">SF4428</name>
    <name type="ordered locus">S4699</name>
</gene>
<proteinExistence type="inferred from homology"/>
<feature type="chain" id="PRO_0000194580" description="Right origin-binding protein">
    <location>
        <begin position="1"/>
        <end position="289"/>
    </location>
</feature>
<feature type="domain" description="HTH araC/xylS-type" evidence="3">
    <location>
        <begin position="8"/>
        <end position="106"/>
    </location>
</feature>
<feature type="DNA-binding region" description="H-T-H motif" evidence="3">
    <location>
        <begin position="25"/>
        <end position="46"/>
    </location>
</feature>
<feature type="DNA-binding region" description="H-T-H motif" evidence="3">
    <location>
        <begin position="73"/>
        <end position="96"/>
    </location>
</feature>
<protein>
    <recommendedName>
        <fullName>Right origin-binding protein</fullName>
    </recommendedName>
</protein>
<dbReference type="EMBL" id="AE005674">
    <property type="protein sequence ID" value="AAN45841.1"/>
    <property type="molecule type" value="Genomic_DNA"/>
</dbReference>
<dbReference type="EMBL" id="AE014073">
    <property type="protein sequence ID" value="AAP19615.1"/>
    <property type="molecule type" value="Genomic_DNA"/>
</dbReference>
<dbReference type="RefSeq" id="NP_710134.1">
    <property type="nucleotide sequence ID" value="NC_004337.2"/>
</dbReference>
<dbReference type="SMR" id="P0ACI2"/>
<dbReference type="STRING" id="198214.SF4428"/>
<dbReference type="PaxDb" id="198214-SF4428"/>
<dbReference type="GeneID" id="1027496"/>
<dbReference type="KEGG" id="sfl:SF4428"/>
<dbReference type="KEGG" id="sfx:S4699"/>
<dbReference type="PATRIC" id="fig|198214.7.peg.5219"/>
<dbReference type="HOGENOM" id="CLU_000445_81_1_6"/>
<dbReference type="Proteomes" id="UP000001006">
    <property type="component" value="Chromosome"/>
</dbReference>
<dbReference type="Proteomes" id="UP000002673">
    <property type="component" value="Chromosome"/>
</dbReference>
<dbReference type="GO" id="GO:0003700">
    <property type="term" value="F:DNA-binding transcription factor activity"/>
    <property type="evidence" value="ECO:0007669"/>
    <property type="project" value="InterPro"/>
</dbReference>
<dbReference type="GO" id="GO:0043565">
    <property type="term" value="F:sequence-specific DNA binding"/>
    <property type="evidence" value="ECO:0007669"/>
    <property type="project" value="InterPro"/>
</dbReference>
<dbReference type="FunFam" id="1.10.10.60:FF:000013">
    <property type="entry name" value="DNA-binding transcriptional activator MarA"/>
    <property type="match status" value="1"/>
</dbReference>
<dbReference type="FunFam" id="1.10.10.60:FF:000030">
    <property type="entry name" value="DNA-binding transcriptional regulator SoxS"/>
    <property type="match status" value="1"/>
</dbReference>
<dbReference type="Gene3D" id="1.10.10.60">
    <property type="entry name" value="Homeodomain-like"/>
    <property type="match status" value="2"/>
</dbReference>
<dbReference type="Gene3D" id="3.20.80.10">
    <property type="entry name" value="Regulatory factor, effector binding domain"/>
    <property type="match status" value="1"/>
</dbReference>
<dbReference type="InterPro" id="IPR010499">
    <property type="entry name" value="AraC_E-bd"/>
</dbReference>
<dbReference type="InterPro" id="IPR029442">
    <property type="entry name" value="GyrI-like"/>
</dbReference>
<dbReference type="InterPro" id="IPR009057">
    <property type="entry name" value="Homeodomain-like_sf"/>
</dbReference>
<dbReference type="InterPro" id="IPR018060">
    <property type="entry name" value="HTH_AraC"/>
</dbReference>
<dbReference type="InterPro" id="IPR018062">
    <property type="entry name" value="HTH_AraC-typ_CS"/>
</dbReference>
<dbReference type="InterPro" id="IPR050959">
    <property type="entry name" value="MarA-like"/>
</dbReference>
<dbReference type="InterPro" id="IPR011256">
    <property type="entry name" value="Reg_factor_effector_dom_sf"/>
</dbReference>
<dbReference type="InterPro" id="IPR020449">
    <property type="entry name" value="Tscrpt_reg_AraC-type_HTH"/>
</dbReference>
<dbReference type="NCBIfam" id="NF011701">
    <property type="entry name" value="PRK15121.1"/>
    <property type="match status" value="1"/>
</dbReference>
<dbReference type="NCBIfam" id="NF012228">
    <property type="entry name" value="RobA_TF"/>
    <property type="match status" value="1"/>
</dbReference>
<dbReference type="PANTHER" id="PTHR47504">
    <property type="entry name" value="RIGHT ORIGIN-BINDING PROTEIN"/>
    <property type="match status" value="1"/>
</dbReference>
<dbReference type="PANTHER" id="PTHR47504:SF5">
    <property type="entry name" value="RIGHT ORIGIN-BINDING PROTEIN"/>
    <property type="match status" value="1"/>
</dbReference>
<dbReference type="Pfam" id="PF06445">
    <property type="entry name" value="GyrI-like"/>
    <property type="match status" value="1"/>
</dbReference>
<dbReference type="Pfam" id="PF12833">
    <property type="entry name" value="HTH_18"/>
    <property type="match status" value="1"/>
</dbReference>
<dbReference type="PRINTS" id="PR00032">
    <property type="entry name" value="HTHARAC"/>
</dbReference>
<dbReference type="SMART" id="SM00871">
    <property type="entry name" value="AraC_E_bind"/>
    <property type="match status" value="1"/>
</dbReference>
<dbReference type="SMART" id="SM00342">
    <property type="entry name" value="HTH_ARAC"/>
    <property type="match status" value="1"/>
</dbReference>
<dbReference type="SUPFAM" id="SSF46689">
    <property type="entry name" value="Homeodomain-like"/>
    <property type="match status" value="2"/>
</dbReference>
<dbReference type="SUPFAM" id="SSF55136">
    <property type="entry name" value="Probable bacterial effector-binding domain"/>
    <property type="match status" value="1"/>
</dbReference>
<dbReference type="PROSITE" id="PS00041">
    <property type="entry name" value="HTH_ARAC_FAMILY_1"/>
    <property type="match status" value="1"/>
</dbReference>
<dbReference type="PROSITE" id="PS01124">
    <property type="entry name" value="HTH_ARAC_FAMILY_2"/>
    <property type="match status" value="1"/>
</dbReference>
<accession>P0ACI2</accession>
<accession>P27292</accession>
<sequence length="289" mass="33145">MDQAGIIRDLLIWLEGHLDQPLSLDNVAAKAGYSKWHLQRMFKDVTGHAIGAYIRARRLSKSAVALRLTARPILDIALQYRFDSQQTFTRAFKKQFAQTPALYRRSPEWSAFGIRPPLRLGEFTMPEHKFVTLEDTPLIGVTQSYSCSLEQISDFRHEMRYQFWHDFLGNAPTIPPVLYGLNETRPSQDKDDEQEVFYTTALAQDQADGYVLTGHPVMLQGGEYVMFTYEGLGTGVQEFILTVYGTCMPMLNLTRRKGQDIERYYPAEDAKAGDRPINLRCELLIPIRR</sequence>
<organism>
    <name type="scientific">Shigella flexneri</name>
    <dbReference type="NCBI Taxonomy" id="623"/>
    <lineage>
        <taxon>Bacteria</taxon>
        <taxon>Pseudomonadati</taxon>
        <taxon>Pseudomonadota</taxon>
        <taxon>Gammaproteobacteria</taxon>
        <taxon>Enterobacterales</taxon>
        <taxon>Enterobacteriaceae</taxon>
        <taxon>Shigella</taxon>
    </lineage>
</organism>
<keyword id="KW-0238">DNA-binding</keyword>
<keyword id="KW-1185">Reference proteome</keyword>
<keyword id="KW-0804">Transcription</keyword>
<keyword id="KW-0805">Transcription regulation</keyword>
<reference key="1">
    <citation type="journal article" date="2002" name="Nucleic Acids Res.">
        <title>Genome sequence of Shigella flexneri 2a: insights into pathogenicity through comparison with genomes of Escherichia coli K12 and O157.</title>
        <authorList>
            <person name="Jin Q."/>
            <person name="Yuan Z."/>
            <person name="Xu J."/>
            <person name="Wang Y."/>
            <person name="Shen Y."/>
            <person name="Lu W."/>
            <person name="Wang J."/>
            <person name="Liu H."/>
            <person name="Yang J."/>
            <person name="Yang F."/>
            <person name="Zhang X."/>
            <person name="Zhang J."/>
            <person name="Yang G."/>
            <person name="Wu H."/>
            <person name="Qu D."/>
            <person name="Dong J."/>
            <person name="Sun L."/>
            <person name="Xue Y."/>
            <person name="Zhao A."/>
            <person name="Gao Y."/>
            <person name="Zhu J."/>
            <person name="Kan B."/>
            <person name="Ding K."/>
            <person name="Chen S."/>
            <person name="Cheng H."/>
            <person name="Yao Z."/>
            <person name="He B."/>
            <person name="Chen R."/>
            <person name="Ma D."/>
            <person name="Qiang B."/>
            <person name="Wen Y."/>
            <person name="Hou Y."/>
            <person name="Yu J."/>
        </authorList>
    </citation>
    <scope>NUCLEOTIDE SEQUENCE [LARGE SCALE GENOMIC DNA]</scope>
    <source>
        <strain>301 / Serotype 2a</strain>
    </source>
</reference>
<reference key="2">
    <citation type="journal article" date="2003" name="Infect. Immun.">
        <title>Complete genome sequence and comparative genomics of Shigella flexneri serotype 2a strain 2457T.</title>
        <authorList>
            <person name="Wei J."/>
            <person name="Goldberg M.B."/>
            <person name="Burland V."/>
            <person name="Venkatesan M.M."/>
            <person name="Deng W."/>
            <person name="Fournier G."/>
            <person name="Mayhew G.F."/>
            <person name="Plunkett G. III"/>
            <person name="Rose D.J."/>
            <person name="Darling A."/>
            <person name="Mau B."/>
            <person name="Perna N.T."/>
            <person name="Payne S.M."/>
            <person name="Runyen-Janecky L.J."/>
            <person name="Zhou S."/>
            <person name="Schwartz D.C."/>
            <person name="Blattner F.R."/>
        </authorList>
    </citation>
    <scope>NUCLEOTIDE SEQUENCE [LARGE SCALE GENOMIC DNA]</scope>
    <source>
        <strain>ATCC 700930 / 2457T / Serotype 2a</strain>
    </source>
</reference>
<name>ROB_SHIFL</name>